<protein>
    <recommendedName>
        <fullName evidence="1">tRNA uridine 5-carboxymethylaminomethyl modification enzyme MnmG</fullName>
    </recommendedName>
    <alternativeName>
        <fullName evidence="1">Glucose-inhibited division protein A</fullName>
    </alternativeName>
</protein>
<evidence type="ECO:0000255" key="1">
    <source>
        <dbReference type="HAMAP-Rule" id="MF_00129"/>
    </source>
</evidence>
<name>MNMG_POLAQ</name>
<comment type="function">
    <text evidence="1">NAD-binding protein involved in the addition of a carboxymethylaminomethyl (cmnm) group at the wobble position (U34) of certain tRNAs, forming tRNA-cmnm(5)s(2)U34.</text>
</comment>
<comment type="cofactor">
    <cofactor evidence="1">
        <name>FAD</name>
        <dbReference type="ChEBI" id="CHEBI:57692"/>
    </cofactor>
</comment>
<comment type="subunit">
    <text evidence="1">Homodimer. Heterotetramer of two MnmE and two MnmG subunits.</text>
</comment>
<comment type="subcellular location">
    <subcellularLocation>
        <location evidence="1">Cytoplasm</location>
    </subcellularLocation>
</comment>
<comment type="similarity">
    <text evidence="1">Belongs to the MnmG family.</text>
</comment>
<feature type="chain" id="PRO_1000076324" description="tRNA uridine 5-carboxymethylaminomethyl modification enzyme MnmG">
    <location>
        <begin position="1"/>
        <end position="639"/>
    </location>
</feature>
<feature type="binding site" evidence="1">
    <location>
        <begin position="13"/>
        <end position="18"/>
    </location>
    <ligand>
        <name>FAD</name>
        <dbReference type="ChEBI" id="CHEBI:57692"/>
    </ligand>
</feature>
<feature type="binding site" evidence="1">
    <location>
        <begin position="274"/>
        <end position="288"/>
    </location>
    <ligand>
        <name>NAD(+)</name>
        <dbReference type="ChEBI" id="CHEBI:57540"/>
    </ligand>
</feature>
<keyword id="KW-0963">Cytoplasm</keyword>
<keyword id="KW-0274">FAD</keyword>
<keyword id="KW-0285">Flavoprotein</keyword>
<keyword id="KW-0520">NAD</keyword>
<keyword id="KW-1185">Reference proteome</keyword>
<keyword id="KW-0819">tRNA processing</keyword>
<reference key="1">
    <citation type="journal article" date="2012" name="Stand. Genomic Sci.">
        <title>Complete genome sequence of Polynucleobacter necessarius subsp. asymbioticus type strain (QLW-P1DMWA-1(T)).</title>
        <authorList>
            <person name="Meincke L."/>
            <person name="Copeland A."/>
            <person name="Lapidus A."/>
            <person name="Lucas S."/>
            <person name="Berry K.W."/>
            <person name="Del Rio T.G."/>
            <person name="Hammon N."/>
            <person name="Dalin E."/>
            <person name="Tice H."/>
            <person name="Pitluck S."/>
            <person name="Richardson P."/>
            <person name="Bruce D."/>
            <person name="Goodwin L."/>
            <person name="Han C."/>
            <person name="Tapia R."/>
            <person name="Detter J.C."/>
            <person name="Schmutz J."/>
            <person name="Brettin T."/>
            <person name="Larimer F."/>
            <person name="Land M."/>
            <person name="Hauser L."/>
            <person name="Kyrpides N.C."/>
            <person name="Ivanova N."/>
            <person name="Goker M."/>
            <person name="Woyke T."/>
            <person name="Wu Q.L."/>
            <person name="Pockl M."/>
            <person name="Hahn M.W."/>
            <person name="Klenk H.P."/>
        </authorList>
    </citation>
    <scope>NUCLEOTIDE SEQUENCE [LARGE SCALE GENOMIC DNA]</scope>
    <source>
        <strain>DSM 18221 / CIP 109841 / QLW-P1DMWA-1</strain>
    </source>
</reference>
<organism>
    <name type="scientific">Polynucleobacter asymbioticus (strain DSM 18221 / CIP 109841 / QLW-P1DMWA-1)</name>
    <name type="common">Polynucleobacter necessarius subsp. asymbioticus</name>
    <dbReference type="NCBI Taxonomy" id="312153"/>
    <lineage>
        <taxon>Bacteria</taxon>
        <taxon>Pseudomonadati</taxon>
        <taxon>Pseudomonadota</taxon>
        <taxon>Betaproteobacteria</taxon>
        <taxon>Burkholderiales</taxon>
        <taxon>Burkholderiaceae</taxon>
        <taxon>Polynucleobacter</taxon>
    </lineage>
</organism>
<accession>A4SUS3</accession>
<proteinExistence type="inferred from homology"/>
<dbReference type="EMBL" id="CP000655">
    <property type="protein sequence ID" value="ABP33237.1"/>
    <property type="molecule type" value="Genomic_DNA"/>
</dbReference>
<dbReference type="RefSeq" id="WP_011901863.1">
    <property type="nucleotide sequence ID" value="NC_009379.1"/>
</dbReference>
<dbReference type="SMR" id="A4SUS3"/>
<dbReference type="GeneID" id="31480351"/>
<dbReference type="KEGG" id="pnu:Pnuc_0015"/>
<dbReference type="eggNOG" id="COG0445">
    <property type="taxonomic scope" value="Bacteria"/>
</dbReference>
<dbReference type="HOGENOM" id="CLU_007831_2_2_4"/>
<dbReference type="Proteomes" id="UP000000231">
    <property type="component" value="Chromosome"/>
</dbReference>
<dbReference type="GO" id="GO:0005829">
    <property type="term" value="C:cytosol"/>
    <property type="evidence" value="ECO:0007669"/>
    <property type="project" value="TreeGrafter"/>
</dbReference>
<dbReference type="GO" id="GO:0050660">
    <property type="term" value="F:flavin adenine dinucleotide binding"/>
    <property type="evidence" value="ECO:0007669"/>
    <property type="project" value="UniProtKB-UniRule"/>
</dbReference>
<dbReference type="GO" id="GO:0030488">
    <property type="term" value="P:tRNA methylation"/>
    <property type="evidence" value="ECO:0007669"/>
    <property type="project" value="TreeGrafter"/>
</dbReference>
<dbReference type="GO" id="GO:0002098">
    <property type="term" value="P:tRNA wobble uridine modification"/>
    <property type="evidence" value="ECO:0007669"/>
    <property type="project" value="InterPro"/>
</dbReference>
<dbReference type="FunFam" id="1.10.10.1800:FF:000001">
    <property type="entry name" value="tRNA uridine 5-carboxymethylaminomethyl modification enzyme MnmG"/>
    <property type="match status" value="1"/>
</dbReference>
<dbReference type="FunFam" id="1.10.150.570:FF:000001">
    <property type="entry name" value="tRNA uridine 5-carboxymethylaminomethyl modification enzyme MnmG"/>
    <property type="match status" value="1"/>
</dbReference>
<dbReference type="FunFam" id="3.50.50.60:FF:000002">
    <property type="entry name" value="tRNA uridine 5-carboxymethylaminomethyl modification enzyme MnmG"/>
    <property type="match status" value="1"/>
</dbReference>
<dbReference type="FunFam" id="3.50.50.60:FF:000010">
    <property type="entry name" value="tRNA uridine 5-carboxymethylaminomethyl modification enzyme MnmG"/>
    <property type="match status" value="1"/>
</dbReference>
<dbReference type="Gene3D" id="3.50.50.60">
    <property type="entry name" value="FAD/NAD(P)-binding domain"/>
    <property type="match status" value="2"/>
</dbReference>
<dbReference type="Gene3D" id="1.10.150.570">
    <property type="entry name" value="GidA associated domain, C-terminal subdomain"/>
    <property type="match status" value="1"/>
</dbReference>
<dbReference type="Gene3D" id="1.10.10.1800">
    <property type="entry name" value="tRNA uridine 5-carboxymethylaminomethyl modification enzyme MnmG/GidA"/>
    <property type="match status" value="1"/>
</dbReference>
<dbReference type="HAMAP" id="MF_00129">
    <property type="entry name" value="MnmG_GidA"/>
    <property type="match status" value="1"/>
</dbReference>
<dbReference type="InterPro" id="IPR036188">
    <property type="entry name" value="FAD/NAD-bd_sf"/>
</dbReference>
<dbReference type="InterPro" id="IPR049312">
    <property type="entry name" value="GIDA_C_N"/>
</dbReference>
<dbReference type="InterPro" id="IPR004416">
    <property type="entry name" value="MnmG"/>
</dbReference>
<dbReference type="InterPro" id="IPR002218">
    <property type="entry name" value="MnmG-rel"/>
</dbReference>
<dbReference type="InterPro" id="IPR020595">
    <property type="entry name" value="MnmG-rel_CS"/>
</dbReference>
<dbReference type="InterPro" id="IPR026904">
    <property type="entry name" value="MnmG_C"/>
</dbReference>
<dbReference type="InterPro" id="IPR047001">
    <property type="entry name" value="MnmG_C_subdom"/>
</dbReference>
<dbReference type="InterPro" id="IPR044920">
    <property type="entry name" value="MnmG_C_subdom_sf"/>
</dbReference>
<dbReference type="InterPro" id="IPR040131">
    <property type="entry name" value="MnmG_N"/>
</dbReference>
<dbReference type="NCBIfam" id="TIGR00136">
    <property type="entry name" value="mnmG_gidA"/>
    <property type="match status" value="1"/>
</dbReference>
<dbReference type="PANTHER" id="PTHR11806">
    <property type="entry name" value="GLUCOSE INHIBITED DIVISION PROTEIN A"/>
    <property type="match status" value="1"/>
</dbReference>
<dbReference type="PANTHER" id="PTHR11806:SF0">
    <property type="entry name" value="PROTEIN MTO1 HOMOLOG, MITOCHONDRIAL"/>
    <property type="match status" value="1"/>
</dbReference>
<dbReference type="Pfam" id="PF01134">
    <property type="entry name" value="GIDA"/>
    <property type="match status" value="1"/>
</dbReference>
<dbReference type="Pfam" id="PF21680">
    <property type="entry name" value="GIDA_C_1st"/>
    <property type="match status" value="1"/>
</dbReference>
<dbReference type="Pfam" id="PF13932">
    <property type="entry name" value="SAM_GIDA_C"/>
    <property type="match status" value="1"/>
</dbReference>
<dbReference type="SMART" id="SM01228">
    <property type="entry name" value="GIDA_assoc_3"/>
    <property type="match status" value="1"/>
</dbReference>
<dbReference type="SUPFAM" id="SSF51905">
    <property type="entry name" value="FAD/NAD(P)-binding domain"/>
    <property type="match status" value="1"/>
</dbReference>
<dbReference type="PROSITE" id="PS01280">
    <property type="entry name" value="GIDA_1"/>
    <property type="match status" value="1"/>
</dbReference>
<dbReference type="PROSITE" id="PS01281">
    <property type="entry name" value="GIDA_2"/>
    <property type="match status" value="1"/>
</dbReference>
<sequence length="639" mass="70108">MRYSKNFDVIVVGGGHAGTEAALASARMGCDTLLITHSIENLGAMSCNPSIGGIGKGHLVKEIDAMGGAMAAATDEAGIQFRILNSSKGPAVRATRAQGDRVLYKAAIRRRLENQPNLSLFQAAVDDLLVKGDEVQGVVTQMGLEFMAKKVVLTAGTFLDGKIHVGLNNYAGGRAGDPAAVSLSARLKELKLPQGRLKTGTPPRIDGRTIDFSVMLEQPGDLDPVPVFSYLGRPEQHPKQVPCWISHTNEQTHDIIRGGLDRSPMYTGVIEGVGPRYCPSIEDKIHRFASRNSHQIFLEPEGLTTNEFYPNGISTSLPFDVQWELVRSIRGLESAVIVRPGYAIEYDFFDPRHLRHSLETKAIGGLYFAGQINGTTGYEEAAAQGMLAGINAGLAAQGKEAWLPKRSESYIGVLVDDLITRGVQEPYRMFTSRAEYRLSLREDNADMRLTAIGRDLGLVDDYRWEVFCRKQEAVSRETSRLKDIWVGPKHEIAPLVTQLLGQELSHECNLTELLRRPGITYEAITALGNRIWAPESLDDDLGLAAQISDQVEISVKYQGYIERQAVEIARQEHNETFPLPEGLDYSQVLGLSKEVQQKLNLHKPETLGQAGRISGVTPAALSLLLVHLKKGLGRTQETI</sequence>
<gene>
    <name evidence="1" type="primary">mnmG</name>
    <name evidence="1" type="synonym">gidA</name>
    <name type="ordered locus">Pnuc_0015</name>
</gene>